<accession>A6Q3R4</accession>
<sequence length="871" mass="100866">MSKATKYDPKKVERQFYQIWETRGYFETDGNKKIQNGKTFCIMMPPPNVTGRLHIGHALTFTLQDIMVRYKRMDGYETLWQPGTDHAGIATQNVVEKQLLSKGIKKEEIGREKFLEYVWKWKEESGNAIVTQLRLLGVSPAWSRERFTMDKGLKNAVREAFVNLYYEGLIVKGNYMINWCTHDGALSDIEVEYEEKEGALYHIKYPIVGSDEYLVVATTRPETYFGDTAVMVNPNDERYKHLIGKKVRLPLINREIPIIADEHVDMEFGTGAVKVTPAHDPNDYEVGKRHNLPFITIFDENGILNEEAGEFAGIERLEARKKVVEKLEQEGFIEKIEPHKHQVGHCYRCGNVVEPYISPQWFVKAEIAKEAVKKANEGETKFYPPQWLNNFNAWMRELRDWCISRQLWWGHRIPVWYCRACGHEWASKKEHEESCPKCGSTDIYQDPDVLDTWFSSALWPFSTLGWGNGDWGKGVKWFEDDLKKFYPNDLLITGFDILFFWVARMMMMGEHFLHKLPFKDVYLHALVRDEHGQKMSKSRGNVIDPIDTIEEYSADALRFTLAALAVQGRDIRLSKERLELYRNFTNKLYNAARFLQIHQEKFDDLQNIQIKTDLGKYILSRFGLAIQEVRNNLNSYRFNDAATTLYRFLWGEFCDWGIELSKVNKDAIAELGAIFKESMKLLHPFMPFITEFLYQELSGTSIEENESIMIQPYPKAAPIDEEIMKRFETIIDAIVSIRRAKALIDMANKTIPKVLIKGDLEESAKAYISKLAKVETIEFVSEPAENAVTDIGNYVEVFIPLEGIDLTPILNRLNKQKEKLQKEIDKLSRMLSNENFVKNAPQAVVEQNRAALAEAQNRLATIEEELARLTR</sequence>
<gene>
    <name evidence="1" type="primary">valS</name>
    <name type="ordered locus">NIS_1013</name>
</gene>
<comment type="function">
    <text evidence="1">Catalyzes the attachment of valine to tRNA(Val). As ValRS can inadvertently accommodate and process structurally similar amino acids such as threonine, to avoid such errors, it has a 'posttransfer' editing activity that hydrolyzes mischarged Thr-tRNA(Val) in a tRNA-dependent manner.</text>
</comment>
<comment type="catalytic activity">
    <reaction evidence="1">
        <text>tRNA(Val) + L-valine + ATP = L-valyl-tRNA(Val) + AMP + diphosphate</text>
        <dbReference type="Rhea" id="RHEA:10704"/>
        <dbReference type="Rhea" id="RHEA-COMP:9672"/>
        <dbReference type="Rhea" id="RHEA-COMP:9708"/>
        <dbReference type="ChEBI" id="CHEBI:30616"/>
        <dbReference type="ChEBI" id="CHEBI:33019"/>
        <dbReference type="ChEBI" id="CHEBI:57762"/>
        <dbReference type="ChEBI" id="CHEBI:78442"/>
        <dbReference type="ChEBI" id="CHEBI:78537"/>
        <dbReference type="ChEBI" id="CHEBI:456215"/>
        <dbReference type="EC" id="6.1.1.9"/>
    </reaction>
</comment>
<comment type="subunit">
    <text evidence="1">Monomer.</text>
</comment>
<comment type="subcellular location">
    <subcellularLocation>
        <location evidence="1">Cytoplasm</location>
    </subcellularLocation>
</comment>
<comment type="domain">
    <text evidence="1">ValRS has two distinct active sites: one for aminoacylation and one for editing. The misactivated threonine is translocated from the active site to the editing site.</text>
</comment>
<comment type="domain">
    <text evidence="1">The C-terminal coiled-coil domain is crucial for aminoacylation activity.</text>
</comment>
<comment type="similarity">
    <text evidence="1">Belongs to the class-I aminoacyl-tRNA synthetase family. ValS type 1 subfamily.</text>
</comment>
<dbReference type="EC" id="6.1.1.9" evidence="1"/>
<dbReference type="EMBL" id="AP009178">
    <property type="protein sequence ID" value="BAF70123.1"/>
    <property type="molecule type" value="Genomic_DNA"/>
</dbReference>
<dbReference type="RefSeq" id="WP_012082386.1">
    <property type="nucleotide sequence ID" value="NC_009662.1"/>
</dbReference>
<dbReference type="SMR" id="A6Q3R4"/>
<dbReference type="FunCoup" id="A6Q3R4">
    <property type="interactions" value="440"/>
</dbReference>
<dbReference type="STRING" id="387092.NIS_1013"/>
<dbReference type="KEGG" id="nis:NIS_1013"/>
<dbReference type="eggNOG" id="COG0525">
    <property type="taxonomic scope" value="Bacteria"/>
</dbReference>
<dbReference type="HOGENOM" id="CLU_001493_0_2_7"/>
<dbReference type="InParanoid" id="A6Q3R4"/>
<dbReference type="OrthoDB" id="9810365at2"/>
<dbReference type="Proteomes" id="UP000001118">
    <property type="component" value="Chromosome"/>
</dbReference>
<dbReference type="GO" id="GO:0005829">
    <property type="term" value="C:cytosol"/>
    <property type="evidence" value="ECO:0007669"/>
    <property type="project" value="TreeGrafter"/>
</dbReference>
<dbReference type="GO" id="GO:0002161">
    <property type="term" value="F:aminoacyl-tRNA deacylase activity"/>
    <property type="evidence" value="ECO:0007669"/>
    <property type="project" value="InterPro"/>
</dbReference>
<dbReference type="GO" id="GO:0005524">
    <property type="term" value="F:ATP binding"/>
    <property type="evidence" value="ECO:0007669"/>
    <property type="project" value="UniProtKB-UniRule"/>
</dbReference>
<dbReference type="GO" id="GO:0004832">
    <property type="term" value="F:valine-tRNA ligase activity"/>
    <property type="evidence" value="ECO:0007669"/>
    <property type="project" value="UniProtKB-UniRule"/>
</dbReference>
<dbReference type="GO" id="GO:0006438">
    <property type="term" value="P:valyl-tRNA aminoacylation"/>
    <property type="evidence" value="ECO:0007669"/>
    <property type="project" value="UniProtKB-UniRule"/>
</dbReference>
<dbReference type="CDD" id="cd07962">
    <property type="entry name" value="Anticodon_Ia_Val"/>
    <property type="match status" value="1"/>
</dbReference>
<dbReference type="CDD" id="cd00817">
    <property type="entry name" value="ValRS_core"/>
    <property type="match status" value="1"/>
</dbReference>
<dbReference type="FunFam" id="1.10.287.380:FF:000001">
    <property type="entry name" value="Valine--tRNA ligase"/>
    <property type="match status" value="1"/>
</dbReference>
<dbReference type="FunFam" id="3.40.50.620:FF:000382">
    <property type="entry name" value="Valine--tRNA ligase"/>
    <property type="match status" value="1"/>
</dbReference>
<dbReference type="FunFam" id="3.90.740.10:FF:000005">
    <property type="entry name" value="Valine--tRNA ligase, mitochondrial"/>
    <property type="match status" value="1"/>
</dbReference>
<dbReference type="Gene3D" id="3.40.50.620">
    <property type="entry name" value="HUPs"/>
    <property type="match status" value="2"/>
</dbReference>
<dbReference type="Gene3D" id="1.10.730.10">
    <property type="entry name" value="Isoleucyl-tRNA Synthetase, Domain 1"/>
    <property type="match status" value="1"/>
</dbReference>
<dbReference type="Gene3D" id="1.10.287.380">
    <property type="entry name" value="Valyl-tRNA synthetase, C-terminal domain"/>
    <property type="match status" value="1"/>
</dbReference>
<dbReference type="Gene3D" id="3.90.740.10">
    <property type="entry name" value="Valyl/Leucyl/Isoleucyl-tRNA synthetase, editing domain"/>
    <property type="match status" value="1"/>
</dbReference>
<dbReference type="HAMAP" id="MF_02004">
    <property type="entry name" value="Val_tRNA_synth_type1"/>
    <property type="match status" value="1"/>
</dbReference>
<dbReference type="InterPro" id="IPR001412">
    <property type="entry name" value="aa-tRNA-synth_I_CS"/>
</dbReference>
<dbReference type="InterPro" id="IPR002300">
    <property type="entry name" value="aa-tRNA-synth_Ia"/>
</dbReference>
<dbReference type="InterPro" id="IPR033705">
    <property type="entry name" value="Anticodon_Ia_Val"/>
</dbReference>
<dbReference type="InterPro" id="IPR013155">
    <property type="entry name" value="M/V/L/I-tRNA-synth_anticd-bd"/>
</dbReference>
<dbReference type="InterPro" id="IPR014729">
    <property type="entry name" value="Rossmann-like_a/b/a_fold"/>
</dbReference>
<dbReference type="InterPro" id="IPR010978">
    <property type="entry name" value="tRNA-bd_arm"/>
</dbReference>
<dbReference type="InterPro" id="IPR009080">
    <property type="entry name" value="tRNAsynth_Ia_anticodon-bd"/>
</dbReference>
<dbReference type="InterPro" id="IPR037118">
    <property type="entry name" value="Val-tRNA_synth_C_sf"/>
</dbReference>
<dbReference type="InterPro" id="IPR019499">
    <property type="entry name" value="Val-tRNA_synth_tRNA-bd"/>
</dbReference>
<dbReference type="InterPro" id="IPR009008">
    <property type="entry name" value="Val/Leu/Ile-tRNA-synth_edit"/>
</dbReference>
<dbReference type="InterPro" id="IPR002303">
    <property type="entry name" value="Valyl-tRNA_ligase"/>
</dbReference>
<dbReference type="NCBIfam" id="NF004349">
    <property type="entry name" value="PRK05729.1"/>
    <property type="match status" value="1"/>
</dbReference>
<dbReference type="NCBIfam" id="TIGR00422">
    <property type="entry name" value="valS"/>
    <property type="match status" value="1"/>
</dbReference>
<dbReference type="PANTHER" id="PTHR11946:SF93">
    <property type="entry name" value="VALINE--TRNA LIGASE, CHLOROPLASTIC_MITOCHONDRIAL 2"/>
    <property type="match status" value="1"/>
</dbReference>
<dbReference type="PANTHER" id="PTHR11946">
    <property type="entry name" value="VALYL-TRNA SYNTHETASES"/>
    <property type="match status" value="1"/>
</dbReference>
<dbReference type="Pfam" id="PF08264">
    <property type="entry name" value="Anticodon_1"/>
    <property type="match status" value="1"/>
</dbReference>
<dbReference type="Pfam" id="PF00133">
    <property type="entry name" value="tRNA-synt_1"/>
    <property type="match status" value="1"/>
</dbReference>
<dbReference type="Pfam" id="PF10458">
    <property type="entry name" value="Val_tRNA-synt_C"/>
    <property type="match status" value="1"/>
</dbReference>
<dbReference type="PRINTS" id="PR00986">
    <property type="entry name" value="TRNASYNTHVAL"/>
</dbReference>
<dbReference type="SUPFAM" id="SSF47323">
    <property type="entry name" value="Anticodon-binding domain of a subclass of class I aminoacyl-tRNA synthetases"/>
    <property type="match status" value="1"/>
</dbReference>
<dbReference type="SUPFAM" id="SSF52374">
    <property type="entry name" value="Nucleotidylyl transferase"/>
    <property type="match status" value="1"/>
</dbReference>
<dbReference type="SUPFAM" id="SSF46589">
    <property type="entry name" value="tRNA-binding arm"/>
    <property type="match status" value="1"/>
</dbReference>
<dbReference type="SUPFAM" id="SSF50677">
    <property type="entry name" value="ValRS/IleRS/LeuRS editing domain"/>
    <property type="match status" value="1"/>
</dbReference>
<dbReference type="PROSITE" id="PS00178">
    <property type="entry name" value="AA_TRNA_LIGASE_I"/>
    <property type="match status" value="1"/>
</dbReference>
<proteinExistence type="inferred from homology"/>
<organism>
    <name type="scientific">Nitratiruptor sp. (strain SB155-2)</name>
    <dbReference type="NCBI Taxonomy" id="387092"/>
    <lineage>
        <taxon>Bacteria</taxon>
        <taxon>Pseudomonadati</taxon>
        <taxon>Campylobacterota</taxon>
        <taxon>Epsilonproteobacteria</taxon>
        <taxon>Nautiliales</taxon>
        <taxon>Nitratiruptoraceae</taxon>
        <taxon>Nitratiruptor</taxon>
    </lineage>
</organism>
<feature type="chain" id="PRO_1000022170" description="Valine--tRNA ligase">
    <location>
        <begin position="1"/>
        <end position="871"/>
    </location>
</feature>
<feature type="coiled-coil region" evidence="1">
    <location>
        <begin position="805"/>
        <end position="871"/>
    </location>
</feature>
<feature type="short sequence motif" description="'HIGH' region">
    <location>
        <begin position="47"/>
        <end position="57"/>
    </location>
</feature>
<feature type="short sequence motif" description="'KMSKS' region">
    <location>
        <begin position="534"/>
        <end position="538"/>
    </location>
</feature>
<feature type="binding site" evidence="1">
    <location>
        <position position="537"/>
    </location>
    <ligand>
        <name>ATP</name>
        <dbReference type="ChEBI" id="CHEBI:30616"/>
    </ligand>
</feature>
<reference key="1">
    <citation type="journal article" date="2007" name="Proc. Natl. Acad. Sci. U.S.A.">
        <title>Deep-sea vent epsilon-proteobacterial genomes provide insights into emergence of pathogens.</title>
        <authorList>
            <person name="Nakagawa S."/>
            <person name="Takaki Y."/>
            <person name="Shimamura S."/>
            <person name="Reysenbach A.-L."/>
            <person name="Takai K."/>
            <person name="Horikoshi K."/>
        </authorList>
    </citation>
    <scope>NUCLEOTIDE SEQUENCE [LARGE SCALE GENOMIC DNA]</scope>
    <source>
        <strain>SB155-2</strain>
    </source>
</reference>
<name>SYV_NITSB</name>
<evidence type="ECO:0000255" key="1">
    <source>
        <dbReference type="HAMAP-Rule" id="MF_02004"/>
    </source>
</evidence>
<keyword id="KW-0030">Aminoacyl-tRNA synthetase</keyword>
<keyword id="KW-0067">ATP-binding</keyword>
<keyword id="KW-0175">Coiled coil</keyword>
<keyword id="KW-0963">Cytoplasm</keyword>
<keyword id="KW-0436">Ligase</keyword>
<keyword id="KW-0547">Nucleotide-binding</keyword>
<keyword id="KW-0648">Protein biosynthesis</keyword>
<keyword id="KW-1185">Reference proteome</keyword>
<protein>
    <recommendedName>
        <fullName evidence="1">Valine--tRNA ligase</fullName>
        <ecNumber evidence="1">6.1.1.9</ecNumber>
    </recommendedName>
    <alternativeName>
        <fullName evidence="1">Valyl-tRNA synthetase</fullName>
        <shortName evidence="1">ValRS</shortName>
    </alternativeName>
</protein>